<protein>
    <recommendedName>
        <fullName evidence="1">Protein translocase subunit SecA</fullName>
        <ecNumber evidence="1">7.4.2.8</ecNumber>
    </recommendedName>
</protein>
<evidence type="ECO:0000255" key="1">
    <source>
        <dbReference type="HAMAP-Rule" id="MF_01382"/>
    </source>
</evidence>
<evidence type="ECO:0000256" key="2">
    <source>
        <dbReference type="SAM" id="MobiDB-lite"/>
    </source>
</evidence>
<evidence type="ECO:0000305" key="3"/>
<name>SECA_COXBU</name>
<comment type="function">
    <text evidence="1">Part of the Sec protein translocase complex. Interacts with the SecYEG preprotein conducting channel. Has a central role in coupling the hydrolysis of ATP to the transfer of proteins into and across the cell membrane, serving both as a receptor for the preprotein-SecB complex and as an ATP-driven molecular motor driving the stepwise translocation of polypeptide chains across the membrane.</text>
</comment>
<comment type="catalytic activity">
    <reaction evidence="1">
        <text>ATP + H2O + cellular proteinSide 1 = ADP + phosphate + cellular proteinSide 2.</text>
        <dbReference type="EC" id="7.4.2.8"/>
    </reaction>
</comment>
<comment type="cofactor">
    <cofactor evidence="1">
        <name>Zn(2+)</name>
        <dbReference type="ChEBI" id="CHEBI:29105"/>
    </cofactor>
    <text evidence="1">May bind 1 zinc ion per subunit.</text>
</comment>
<comment type="subunit">
    <text evidence="1">Monomer and homodimer. Part of the essential Sec protein translocation apparatus which comprises SecA, SecYEG and auxiliary proteins SecDF-YajC and YidC.</text>
</comment>
<comment type="subcellular location">
    <subcellularLocation>
        <location evidence="1">Cell inner membrane</location>
        <topology evidence="1">Peripheral membrane protein</topology>
        <orientation evidence="1">Cytoplasmic side</orientation>
    </subcellularLocation>
    <subcellularLocation>
        <location evidence="1">Cytoplasm</location>
    </subcellularLocation>
    <text evidence="1">Distribution is 50-50.</text>
</comment>
<comment type="similarity">
    <text evidence="1">Belongs to the SecA family.</text>
</comment>
<comment type="sequence caution" evidence="3">
    <conflict type="erroneous initiation">
        <sequence resource="EMBL-CDS" id="AAO89711"/>
    </conflict>
    <text>Extended N-terminus.</text>
</comment>
<gene>
    <name evidence="1" type="primary">secA</name>
    <name type="ordered locus">CBU_0147</name>
</gene>
<accession>Q83F06</accession>
<sequence length="913" mass="103879">MLGNIIKKAFGTRNERLLKGYSKIVSRINALEPEIQALSDADLRAKTDEFKKRLVDGEGLDALLPEAFAVVRETSVRTLGLRHFDVQIIGGLALHGGKIAEMRTGEGKTLGATMPAYLNALTGKGVHIVTVNDYLAKRDAEWMKPIYEFLGLTVGVNVPGMEPVEKQAAYAADITYGTNNEFGFDYLRDNMVFDLDQRVQRPLHYAIIDEVDSILIDEARTPLIISGQAEESSDLYVKINKFIPQLKLQKMEEGQKEEEVPPENRGDYTLDEKNRQAYLTEQGHRTIEALMIKQGLMQAGESLYDVSNISLMHYVYAALRAHTLFYRDVHYIVKNNEVIIVDEHTGRLMPGRRWSDGLHQAVEAKEGATIQLENQTLATITFQNYFRLYEKLSGMTATADTEAFELQKIYGLEVVVIPTNRPMIRRDESDQVYLTADAKFDAIVNEVKKRHEKGQPLLIGTASIEASELVARFLKKANIKHEILNAKNHEREAKIIAEAGRPGAVTIATNMAGRGTDIVLGGNLEAEMSELDNLAEEEIQKRKADWQKRHDAVIAAGGLHVLGTERHESRRIDNQLRGRSGRQGDPGSSQFYLSMEDNLLRIFAAERMSNMMRRLGVKEDDVIEHPWITRAIEKAQRRVEGMNFDIRKQLLEYDDVANDQRKVIYQQRFQLLQTDDISETIEAIREEAVSEMISSFVPPQSLEEEWDIPGLEKQIREDFGLALPIAQWLEKDETLHEETLHKRIIDEITKAYKAKEAKADPKAMREVEKTLMLQLLDHHWKEHLAAMDHLRQGIHLRGYAQKNPAQEYKRESFELFTQMLKRIKYELAATLSKLEIATEEQVAQQQRLYQQSAPELQYHHAEMTALQPEKEVAVAEQEEATQPFVRSQPKVGRNESCPCGSGKKYKQCHGKLS</sequence>
<reference key="1">
    <citation type="journal article" date="2003" name="Proc. Natl. Acad. Sci. U.S.A.">
        <title>Complete genome sequence of the Q-fever pathogen, Coxiella burnetii.</title>
        <authorList>
            <person name="Seshadri R."/>
            <person name="Paulsen I.T."/>
            <person name="Eisen J.A."/>
            <person name="Read T.D."/>
            <person name="Nelson K.E."/>
            <person name="Nelson W.C."/>
            <person name="Ward N.L."/>
            <person name="Tettelin H."/>
            <person name="Davidsen T.M."/>
            <person name="Beanan M.J."/>
            <person name="DeBoy R.T."/>
            <person name="Daugherty S.C."/>
            <person name="Brinkac L.M."/>
            <person name="Madupu R."/>
            <person name="Dodson R.J."/>
            <person name="Khouri H.M."/>
            <person name="Lee K.H."/>
            <person name="Carty H.A."/>
            <person name="Scanlan D."/>
            <person name="Heinzen R.A."/>
            <person name="Thompson H.A."/>
            <person name="Samuel J.E."/>
            <person name="Fraser C.M."/>
            <person name="Heidelberg J.F."/>
        </authorList>
    </citation>
    <scope>NUCLEOTIDE SEQUENCE [LARGE SCALE GENOMIC DNA]</scope>
    <source>
        <strain>RSA 493 / Nine Mile phase I</strain>
    </source>
</reference>
<proteinExistence type="inferred from homology"/>
<keyword id="KW-0067">ATP-binding</keyword>
<keyword id="KW-0997">Cell inner membrane</keyword>
<keyword id="KW-1003">Cell membrane</keyword>
<keyword id="KW-0963">Cytoplasm</keyword>
<keyword id="KW-0472">Membrane</keyword>
<keyword id="KW-0479">Metal-binding</keyword>
<keyword id="KW-0547">Nucleotide-binding</keyword>
<keyword id="KW-0653">Protein transport</keyword>
<keyword id="KW-1185">Reference proteome</keyword>
<keyword id="KW-1278">Translocase</keyword>
<keyword id="KW-0811">Translocation</keyword>
<keyword id="KW-0813">Transport</keyword>
<keyword id="KW-0862">Zinc</keyword>
<feature type="chain" id="PRO_0000320787" description="Protein translocase subunit SecA">
    <location>
        <begin position="1"/>
        <end position="913"/>
    </location>
</feature>
<feature type="region of interest" description="Disordered" evidence="2">
    <location>
        <begin position="568"/>
        <end position="588"/>
    </location>
</feature>
<feature type="region of interest" description="Disordered" evidence="2">
    <location>
        <begin position="871"/>
        <end position="913"/>
    </location>
</feature>
<feature type="compositionally biased region" description="Basic residues" evidence="2">
    <location>
        <begin position="903"/>
        <end position="913"/>
    </location>
</feature>
<feature type="binding site" evidence="1">
    <location>
        <position position="87"/>
    </location>
    <ligand>
        <name>ATP</name>
        <dbReference type="ChEBI" id="CHEBI:30616"/>
    </ligand>
</feature>
<feature type="binding site" evidence="1">
    <location>
        <begin position="105"/>
        <end position="109"/>
    </location>
    <ligand>
        <name>ATP</name>
        <dbReference type="ChEBI" id="CHEBI:30616"/>
    </ligand>
</feature>
<feature type="binding site" evidence="1">
    <location>
        <position position="517"/>
    </location>
    <ligand>
        <name>ATP</name>
        <dbReference type="ChEBI" id="CHEBI:30616"/>
    </ligand>
</feature>
<feature type="binding site" evidence="1">
    <location>
        <position position="897"/>
    </location>
    <ligand>
        <name>Zn(2+)</name>
        <dbReference type="ChEBI" id="CHEBI:29105"/>
    </ligand>
</feature>
<feature type="binding site" evidence="1">
    <location>
        <position position="899"/>
    </location>
    <ligand>
        <name>Zn(2+)</name>
        <dbReference type="ChEBI" id="CHEBI:29105"/>
    </ligand>
</feature>
<feature type="binding site" evidence="1">
    <location>
        <position position="908"/>
    </location>
    <ligand>
        <name>Zn(2+)</name>
        <dbReference type="ChEBI" id="CHEBI:29105"/>
    </ligand>
</feature>
<feature type="binding site" evidence="1">
    <location>
        <position position="909"/>
    </location>
    <ligand>
        <name>Zn(2+)</name>
        <dbReference type="ChEBI" id="CHEBI:29105"/>
    </ligand>
</feature>
<dbReference type="EC" id="7.4.2.8" evidence="1"/>
<dbReference type="EMBL" id="AE016828">
    <property type="protein sequence ID" value="AAO89711.2"/>
    <property type="status" value="ALT_INIT"/>
    <property type="molecule type" value="Genomic_DNA"/>
</dbReference>
<dbReference type="RefSeq" id="NP_819197.2">
    <property type="nucleotide sequence ID" value="NC_002971.3"/>
</dbReference>
<dbReference type="RefSeq" id="WP_010957404.1">
    <property type="nucleotide sequence ID" value="NC_002971.4"/>
</dbReference>
<dbReference type="SMR" id="Q83F06"/>
<dbReference type="STRING" id="227377.CBU_0147"/>
<dbReference type="EnsemblBacteria" id="AAO89711">
    <property type="protein sequence ID" value="AAO89711"/>
    <property type="gene ID" value="CBU_0147"/>
</dbReference>
<dbReference type="GeneID" id="1208018"/>
<dbReference type="KEGG" id="cbu:CBU_0147"/>
<dbReference type="PATRIC" id="fig|227377.7.peg.149"/>
<dbReference type="eggNOG" id="COG0653">
    <property type="taxonomic scope" value="Bacteria"/>
</dbReference>
<dbReference type="HOGENOM" id="CLU_005314_3_0_6"/>
<dbReference type="OrthoDB" id="9805579at2"/>
<dbReference type="Proteomes" id="UP000002671">
    <property type="component" value="Chromosome"/>
</dbReference>
<dbReference type="GO" id="GO:0031522">
    <property type="term" value="C:cell envelope Sec protein transport complex"/>
    <property type="evidence" value="ECO:0000318"/>
    <property type="project" value="GO_Central"/>
</dbReference>
<dbReference type="GO" id="GO:0005737">
    <property type="term" value="C:cytoplasm"/>
    <property type="evidence" value="ECO:0007669"/>
    <property type="project" value="UniProtKB-SubCell"/>
</dbReference>
<dbReference type="GO" id="GO:0005886">
    <property type="term" value="C:plasma membrane"/>
    <property type="evidence" value="ECO:0000318"/>
    <property type="project" value="GO_Central"/>
</dbReference>
<dbReference type="GO" id="GO:0005524">
    <property type="term" value="F:ATP binding"/>
    <property type="evidence" value="ECO:0000318"/>
    <property type="project" value="GO_Central"/>
</dbReference>
<dbReference type="GO" id="GO:0046872">
    <property type="term" value="F:metal ion binding"/>
    <property type="evidence" value="ECO:0007669"/>
    <property type="project" value="UniProtKB-KW"/>
</dbReference>
<dbReference type="GO" id="GO:0008564">
    <property type="term" value="F:protein-exporting ATPase activity"/>
    <property type="evidence" value="ECO:0007669"/>
    <property type="project" value="UniProtKB-EC"/>
</dbReference>
<dbReference type="GO" id="GO:0065002">
    <property type="term" value="P:intracellular protein transmembrane transport"/>
    <property type="evidence" value="ECO:0007669"/>
    <property type="project" value="UniProtKB-UniRule"/>
</dbReference>
<dbReference type="GO" id="GO:0017038">
    <property type="term" value="P:protein import"/>
    <property type="evidence" value="ECO:0007669"/>
    <property type="project" value="InterPro"/>
</dbReference>
<dbReference type="GO" id="GO:0006605">
    <property type="term" value="P:protein targeting"/>
    <property type="evidence" value="ECO:0007669"/>
    <property type="project" value="UniProtKB-UniRule"/>
</dbReference>
<dbReference type="GO" id="GO:0043952">
    <property type="term" value="P:protein transport by the Sec complex"/>
    <property type="evidence" value="ECO:0000318"/>
    <property type="project" value="GO_Central"/>
</dbReference>
<dbReference type="CDD" id="cd17928">
    <property type="entry name" value="DEXDc_SecA"/>
    <property type="match status" value="1"/>
</dbReference>
<dbReference type="CDD" id="cd18803">
    <property type="entry name" value="SF2_C_secA"/>
    <property type="match status" value="1"/>
</dbReference>
<dbReference type="FunFam" id="3.40.50.300:FF:000113">
    <property type="entry name" value="Preprotein translocase subunit SecA"/>
    <property type="match status" value="1"/>
</dbReference>
<dbReference type="FunFam" id="3.90.1440.10:FF:000001">
    <property type="entry name" value="Preprotein translocase subunit SecA"/>
    <property type="match status" value="1"/>
</dbReference>
<dbReference type="FunFam" id="1.10.3060.10:FF:000003">
    <property type="entry name" value="Protein translocase subunit SecA"/>
    <property type="match status" value="1"/>
</dbReference>
<dbReference type="FunFam" id="3.40.50.300:FF:000334">
    <property type="entry name" value="Protein translocase subunit SecA"/>
    <property type="match status" value="1"/>
</dbReference>
<dbReference type="Gene3D" id="1.10.3060.10">
    <property type="entry name" value="Helical scaffold and wing domains of SecA"/>
    <property type="match status" value="1"/>
</dbReference>
<dbReference type="Gene3D" id="3.40.50.300">
    <property type="entry name" value="P-loop containing nucleotide triphosphate hydrolases"/>
    <property type="match status" value="2"/>
</dbReference>
<dbReference type="Gene3D" id="3.90.1440.10">
    <property type="entry name" value="SecA, preprotein cross-linking domain"/>
    <property type="match status" value="1"/>
</dbReference>
<dbReference type="HAMAP" id="MF_01382">
    <property type="entry name" value="SecA"/>
    <property type="match status" value="1"/>
</dbReference>
<dbReference type="InterPro" id="IPR014001">
    <property type="entry name" value="Helicase_ATP-bd"/>
</dbReference>
<dbReference type="InterPro" id="IPR001650">
    <property type="entry name" value="Helicase_C-like"/>
</dbReference>
<dbReference type="InterPro" id="IPR027417">
    <property type="entry name" value="P-loop_NTPase"/>
</dbReference>
<dbReference type="InterPro" id="IPR004027">
    <property type="entry name" value="SEC_C_motif"/>
</dbReference>
<dbReference type="InterPro" id="IPR000185">
    <property type="entry name" value="SecA"/>
</dbReference>
<dbReference type="InterPro" id="IPR020937">
    <property type="entry name" value="SecA_CS"/>
</dbReference>
<dbReference type="InterPro" id="IPR011115">
    <property type="entry name" value="SecA_DEAD"/>
</dbReference>
<dbReference type="InterPro" id="IPR014018">
    <property type="entry name" value="SecA_motor_DEAD"/>
</dbReference>
<dbReference type="InterPro" id="IPR011130">
    <property type="entry name" value="SecA_preprotein_X-link_dom"/>
</dbReference>
<dbReference type="InterPro" id="IPR044722">
    <property type="entry name" value="SecA_SF2_C"/>
</dbReference>
<dbReference type="InterPro" id="IPR011116">
    <property type="entry name" value="SecA_Wing/Scaffold"/>
</dbReference>
<dbReference type="InterPro" id="IPR036266">
    <property type="entry name" value="SecA_Wing/Scaffold_sf"/>
</dbReference>
<dbReference type="InterPro" id="IPR036670">
    <property type="entry name" value="SecA_X-link_sf"/>
</dbReference>
<dbReference type="NCBIfam" id="NF009538">
    <property type="entry name" value="PRK12904.1"/>
    <property type="match status" value="1"/>
</dbReference>
<dbReference type="NCBIfam" id="TIGR00963">
    <property type="entry name" value="secA"/>
    <property type="match status" value="1"/>
</dbReference>
<dbReference type="PANTHER" id="PTHR30612:SF0">
    <property type="entry name" value="CHLOROPLAST PROTEIN-TRANSPORTING ATPASE"/>
    <property type="match status" value="1"/>
</dbReference>
<dbReference type="PANTHER" id="PTHR30612">
    <property type="entry name" value="SECA INNER MEMBRANE COMPONENT OF SEC PROTEIN SECRETION SYSTEM"/>
    <property type="match status" value="1"/>
</dbReference>
<dbReference type="Pfam" id="PF21090">
    <property type="entry name" value="P-loop_SecA"/>
    <property type="match status" value="1"/>
</dbReference>
<dbReference type="Pfam" id="PF02810">
    <property type="entry name" value="SEC-C"/>
    <property type="match status" value="1"/>
</dbReference>
<dbReference type="Pfam" id="PF07517">
    <property type="entry name" value="SecA_DEAD"/>
    <property type="match status" value="1"/>
</dbReference>
<dbReference type="Pfam" id="PF01043">
    <property type="entry name" value="SecA_PP_bind"/>
    <property type="match status" value="1"/>
</dbReference>
<dbReference type="Pfam" id="PF07516">
    <property type="entry name" value="SecA_SW"/>
    <property type="match status" value="1"/>
</dbReference>
<dbReference type="PRINTS" id="PR00906">
    <property type="entry name" value="SECA"/>
</dbReference>
<dbReference type="SMART" id="SM00957">
    <property type="entry name" value="SecA_DEAD"/>
    <property type="match status" value="1"/>
</dbReference>
<dbReference type="SMART" id="SM00958">
    <property type="entry name" value="SecA_PP_bind"/>
    <property type="match status" value="1"/>
</dbReference>
<dbReference type="SUPFAM" id="SSF81886">
    <property type="entry name" value="Helical scaffold and wing domains of SecA"/>
    <property type="match status" value="1"/>
</dbReference>
<dbReference type="SUPFAM" id="SSF52540">
    <property type="entry name" value="P-loop containing nucleoside triphosphate hydrolases"/>
    <property type="match status" value="2"/>
</dbReference>
<dbReference type="SUPFAM" id="SSF81767">
    <property type="entry name" value="Pre-protein crosslinking domain of SecA"/>
    <property type="match status" value="1"/>
</dbReference>
<dbReference type="PROSITE" id="PS01312">
    <property type="entry name" value="SECA"/>
    <property type="match status" value="1"/>
</dbReference>
<dbReference type="PROSITE" id="PS51196">
    <property type="entry name" value="SECA_MOTOR_DEAD"/>
    <property type="match status" value="1"/>
</dbReference>
<organism>
    <name type="scientific">Coxiella burnetii (strain RSA 493 / Nine Mile phase I)</name>
    <dbReference type="NCBI Taxonomy" id="227377"/>
    <lineage>
        <taxon>Bacteria</taxon>
        <taxon>Pseudomonadati</taxon>
        <taxon>Pseudomonadota</taxon>
        <taxon>Gammaproteobacteria</taxon>
        <taxon>Legionellales</taxon>
        <taxon>Coxiellaceae</taxon>
        <taxon>Coxiella</taxon>
    </lineage>
</organism>